<protein>
    <recommendedName>
        <fullName evidence="8">Poly(A) RNA polymerase CID14</fullName>
        <ecNumber evidence="3">2.7.7.19</ecNumber>
    </recommendedName>
</protein>
<keyword id="KW-0067">ATP-binding</keyword>
<keyword id="KW-0460">Magnesium</keyword>
<keyword id="KW-0479">Metal-binding</keyword>
<keyword id="KW-0547">Nucleotide-binding</keyword>
<keyword id="KW-0539">Nucleus</keyword>
<keyword id="KW-1185">Reference proteome</keyword>
<keyword id="KW-0808">Transferase</keyword>
<proteinExistence type="inferred from homology"/>
<accession>Q5K9E2</accession>
<gene>
    <name evidence="7" type="primary">CID14</name>
    <name evidence="9" type="ordered locus">CNK02250</name>
</gene>
<comment type="function">
    <text evidence="3">Required for 3' polyadenylation of the 5.8S and 25S rRNAs as a prelude to their degradation in the exosome (By similarity). Involved in the nucleolar organization to ensure faithful chromosome segregation during mitosis (By similarity).</text>
</comment>
<comment type="catalytic activity">
    <reaction evidence="3">
        <text>RNA(n) + ATP = RNA(n)-3'-adenine ribonucleotide + diphosphate</text>
        <dbReference type="Rhea" id="RHEA:11332"/>
        <dbReference type="Rhea" id="RHEA-COMP:14527"/>
        <dbReference type="Rhea" id="RHEA-COMP:17347"/>
        <dbReference type="ChEBI" id="CHEBI:30616"/>
        <dbReference type="ChEBI" id="CHEBI:33019"/>
        <dbReference type="ChEBI" id="CHEBI:140395"/>
        <dbReference type="ChEBI" id="CHEBI:173115"/>
        <dbReference type="EC" id="2.7.7.19"/>
    </reaction>
    <physiologicalReaction direction="left-to-right" evidence="3">
        <dbReference type="Rhea" id="RHEA:11333"/>
    </physiologicalReaction>
</comment>
<comment type="cofactor">
    <cofactor evidence="1">
        <name>Mg(2+)</name>
        <dbReference type="ChEBI" id="CHEBI:18420"/>
    </cofactor>
    <cofactor evidence="1">
        <name>Mn(2+)</name>
        <dbReference type="ChEBI" id="CHEBI:29035"/>
    </cofactor>
</comment>
<comment type="subunit">
    <text evidence="2">Component of the TRAMP complex.</text>
</comment>
<comment type="subcellular location">
    <subcellularLocation>
        <location evidence="3">Nucleus</location>
        <location evidence="3">Nucleolus</location>
    </subcellularLocation>
</comment>
<comment type="disruption phenotype">
    <text evidence="6">Increases the level of AFR1 RNA in the cell, a main efflux pump of azole drugs (PubMed:36130201). Decreases growth on very low carbohydrate medium and on sodium dodecyl sulfate (SDS) (PubMed:36130201). Sensitive to flucytosine (5-FC), a precursor to 5-fluorouracil (5-FU) (PubMed:36130201). Resistance to fluconazole (FCZ), ketoconazole (KCZ) and itraconazole (ICZ) (PubMed:36130201). Cell wall integrity appears normal (PubMed:36130201). Normal growth on rich medium, in presence of amphotericin B (forms membrane pores) and Congo Red (perturbs the arangement of the cell wall) (PubMed:36130201). Does not markedly affect laccase production and has no effect on virulence in a G.mellonella model of infection (PubMed:36130201).</text>
</comment>
<comment type="similarity">
    <text evidence="8">Belongs to the DNA polymerase type-B-like family.</text>
</comment>
<evidence type="ECO:0000250" key="1">
    <source>
        <dbReference type="UniProtKB" id="O13833"/>
    </source>
</evidence>
<evidence type="ECO:0000250" key="2">
    <source>
        <dbReference type="UniProtKB" id="P53632"/>
    </source>
</evidence>
<evidence type="ECO:0000250" key="3">
    <source>
        <dbReference type="UniProtKB" id="Q9UTN3"/>
    </source>
</evidence>
<evidence type="ECO:0000255" key="4"/>
<evidence type="ECO:0000256" key="5">
    <source>
        <dbReference type="SAM" id="MobiDB-lite"/>
    </source>
</evidence>
<evidence type="ECO:0000269" key="6">
    <source>
    </source>
</evidence>
<evidence type="ECO:0000303" key="7">
    <source>
    </source>
</evidence>
<evidence type="ECO:0000305" key="8"/>
<evidence type="ECO:0000312" key="9">
    <source>
        <dbReference type="EMBL" id="AAW46182.2"/>
    </source>
</evidence>
<evidence type="ECO:0000312" key="10">
    <source>
        <dbReference type="Proteomes" id="UP000002149"/>
    </source>
</evidence>
<sequence length="762" mass="84593">MPTGFQPAESFISFGQPASPPYKGNEASSSSRKGKRKASDTPAPGEKQTKKNKKDKKKKGSKKSQPVDEPDKKDGLPGLSKKQKKALKEQEHKARKSDRKRDNSRGIEAGPRNKKEEQKAAERHAPWTELVDVDLCRDPVDLLTEEINAFYKYVSPTREEFEVRLFMIELITRTINKLWPEAEVTPFGSWQTQLYLPQGDIDLVVAHKYLSDANKQRLLAELGKAMRQANITDVVAIIARARVPIIKFVTLEGKINVDISLNQANGVTAGKIINQYLDALPGARQLILIVKYFLSQRSMNEVYTGGLGSYSVICMVISFLQLHPKLRRSEINPELNLGTLLIEFFELFGRNFNYNDVGISIRRGGFYFSKASRGWMKGQSFLLSIEDPQDKDNDISGGSFGIRQVRNTLGGAYELLSMRLFERAEEMSRNARSGRRSTSWKDKEGDDWSILGGVMGITKETLKQRNELTRIHLEGRLHHKLSIPLGADPKPFVQNYRPPPIISVPSVTDHGRGASSPPPPAESSKRNKKDVGAIMVEDDELESDDDSDSDASSYSSSDSDDSDSDPVAISPRTANSRSTSRVPRADISDTESDGIIEISQPFESSGRGRKPLGDSEPSEDEIEVLSNPPEESRYAGGKGRGKAKVKDAFRPPTPPLPGQEGQLSDLSRPPTPPLPPGEEEEEIDSDEEALRRILAESDGDLGSEDEIGKEWQGAIQVDSDSDEEEKKGRKKRKRGVRSEERRAFWAAKGGNRLGQSSGDMSD</sequence>
<name>CID14_CRYNJ</name>
<feature type="chain" id="PRO_0000460458" description="Poly(A) RNA polymerase CID14">
    <location>
        <begin position="1"/>
        <end position="762"/>
    </location>
</feature>
<feature type="domain" description="PAP-associated" evidence="4">
    <location>
        <begin position="336"/>
        <end position="393"/>
    </location>
</feature>
<feature type="region of interest" description="Disordered" evidence="5">
    <location>
        <begin position="1"/>
        <end position="123"/>
    </location>
</feature>
<feature type="region of interest" description="Disordered" evidence="5">
    <location>
        <begin position="482"/>
        <end position="762"/>
    </location>
</feature>
<feature type="compositionally biased region" description="Basic residues" evidence="5">
    <location>
        <begin position="50"/>
        <end position="62"/>
    </location>
</feature>
<feature type="compositionally biased region" description="Basic and acidic residues" evidence="5">
    <location>
        <begin position="65"/>
        <end position="75"/>
    </location>
</feature>
<feature type="compositionally biased region" description="Basic and acidic residues" evidence="5">
    <location>
        <begin position="99"/>
        <end position="123"/>
    </location>
</feature>
<feature type="compositionally biased region" description="Acidic residues" evidence="5">
    <location>
        <begin position="536"/>
        <end position="549"/>
    </location>
</feature>
<feature type="compositionally biased region" description="Polar residues" evidence="5">
    <location>
        <begin position="572"/>
        <end position="581"/>
    </location>
</feature>
<feature type="compositionally biased region" description="Acidic residues" evidence="5">
    <location>
        <begin position="677"/>
        <end position="687"/>
    </location>
</feature>
<feature type="compositionally biased region" description="Acidic residues" evidence="5">
    <location>
        <begin position="697"/>
        <end position="707"/>
    </location>
</feature>
<feature type="compositionally biased region" description="Polar residues" evidence="5">
    <location>
        <begin position="753"/>
        <end position="762"/>
    </location>
</feature>
<feature type="binding site" evidence="1">
    <location>
        <position position="189"/>
    </location>
    <ligand>
        <name>ATP</name>
        <dbReference type="ChEBI" id="CHEBI:30616"/>
    </ligand>
</feature>
<feature type="binding site" evidence="1">
    <location>
        <position position="200"/>
    </location>
    <ligand>
        <name>Mg(2+)</name>
        <dbReference type="ChEBI" id="CHEBI:18420"/>
        <note>catalytic</note>
    </ligand>
</feature>
<feature type="binding site" evidence="1">
    <location>
        <position position="202"/>
    </location>
    <ligand>
        <name>Mg(2+)</name>
        <dbReference type="ChEBI" id="CHEBI:18420"/>
        <note>catalytic</note>
    </ligand>
</feature>
<feature type="binding site" evidence="1">
    <location>
        <position position="266"/>
    </location>
    <ligand>
        <name>ATP</name>
        <dbReference type="ChEBI" id="CHEBI:30616"/>
    </ligand>
</feature>
<feature type="binding site" evidence="1">
    <location>
        <position position="291"/>
    </location>
    <ligand>
        <name>ATP</name>
        <dbReference type="ChEBI" id="CHEBI:30616"/>
    </ligand>
</feature>
<feature type="binding site" evidence="1">
    <location>
        <position position="309"/>
    </location>
    <ligand>
        <name>ATP</name>
        <dbReference type="ChEBI" id="CHEBI:30616"/>
    </ligand>
</feature>
<feature type="binding site" evidence="1">
    <location>
        <position position="310"/>
    </location>
    <ligand>
        <name>ATP</name>
        <dbReference type="ChEBI" id="CHEBI:30616"/>
    </ligand>
</feature>
<feature type="binding site" evidence="1">
    <location>
        <position position="610"/>
    </location>
    <ligand>
        <name>ATP</name>
        <dbReference type="ChEBI" id="CHEBI:30616"/>
    </ligand>
</feature>
<organism evidence="10">
    <name type="scientific">Cryptococcus neoformans var. neoformans serotype D (strain JEC21 / ATCC MYA-565)</name>
    <name type="common">Filobasidiella neoformans</name>
    <dbReference type="NCBI Taxonomy" id="214684"/>
    <lineage>
        <taxon>Eukaryota</taxon>
        <taxon>Fungi</taxon>
        <taxon>Dikarya</taxon>
        <taxon>Basidiomycota</taxon>
        <taxon>Agaricomycotina</taxon>
        <taxon>Tremellomycetes</taxon>
        <taxon>Tremellales</taxon>
        <taxon>Cryptococcaceae</taxon>
        <taxon>Cryptococcus</taxon>
        <taxon>Cryptococcus neoformans species complex</taxon>
    </lineage>
</organism>
<reference evidence="10" key="1">
    <citation type="journal article" date="2005" name="Science">
        <title>The genome of the basidiomycetous yeast and human pathogen Cryptococcus neoformans.</title>
        <authorList>
            <person name="Loftus B.J."/>
            <person name="Fung E."/>
            <person name="Roncaglia P."/>
            <person name="Rowley D."/>
            <person name="Amedeo P."/>
            <person name="Bruno D."/>
            <person name="Vamathevan J."/>
            <person name="Miranda M."/>
            <person name="Anderson I.J."/>
            <person name="Fraser J.A."/>
            <person name="Allen J.E."/>
            <person name="Bosdet I.E."/>
            <person name="Brent M.R."/>
            <person name="Chiu R."/>
            <person name="Doering T.L."/>
            <person name="Donlin M.J."/>
            <person name="D'Souza C.A."/>
            <person name="Fox D.S."/>
            <person name="Grinberg V."/>
            <person name="Fu J."/>
            <person name="Fukushima M."/>
            <person name="Haas B.J."/>
            <person name="Huang J.C."/>
            <person name="Janbon G."/>
            <person name="Jones S.J.M."/>
            <person name="Koo H.L."/>
            <person name="Krzywinski M.I."/>
            <person name="Kwon-Chung K.J."/>
            <person name="Lengeler K.B."/>
            <person name="Maiti R."/>
            <person name="Marra M.A."/>
            <person name="Marra R.E."/>
            <person name="Mathewson C.A."/>
            <person name="Mitchell T.G."/>
            <person name="Pertea M."/>
            <person name="Riggs F.R."/>
            <person name="Salzberg S.L."/>
            <person name="Schein J.E."/>
            <person name="Shvartsbeyn A."/>
            <person name="Shin H."/>
            <person name="Shumway M."/>
            <person name="Specht C.A."/>
            <person name="Suh B.B."/>
            <person name="Tenney A."/>
            <person name="Utterback T.R."/>
            <person name="Wickes B.L."/>
            <person name="Wortman J.R."/>
            <person name="Wye N.H."/>
            <person name="Kronstad J.W."/>
            <person name="Lodge J.K."/>
            <person name="Heitman J."/>
            <person name="Davis R.W."/>
            <person name="Fraser C.M."/>
            <person name="Hyman R.W."/>
        </authorList>
    </citation>
    <scope>NUCLEOTIDE SEQUENCE [LARGE SCALE GENOMIC DNA]</scope>
    <source>
        <strain evidence="10">JEC21 / ATCC MYA-565</strain>
    </source>
</reference>
<reference evidence="8" key="2">
    <citation type="journal article" date="2022" name="Pathog. Dis.">
        <title>Involvement of the Noncanonical Polyadenylation Polymerase Cid14 in Fungal Azole Resistance in the Pathogen Cryptococcus neoformans.</title>
        <authorList>
            <person name="Li C."/>
            <person name="Zhen S."/>
            <person name="Ma X."/>
            <person name="Ma L."/>
            <person name="Wang Z."/>
            <person name="Zhang P."/>
            <person name="Zhu X."/>
        </authorList>
    </citation>
    <scope>DISRUPTION PHENOTYPE</scope>
    <source>
        <strain evidence="7">4500FOA</strain>
    </source>
</reference>
<dbReference type="EC" id="2.7.7.19" evidence="3"/>
<dbReference type="EMBL" id="AE017351">
    <property type="protein sequence ID" value="AAW46182.2"/>
    <property type="molecule type" value="Genomic_DNA"/>
</dbReference>
<dbReference type="RefSeq" id="XP_567699.1">
    <property type="nucleotide sequence ID" value="XM_567699.1"/>
</dbReference>
<dbReference type="SMR" id="Q5K9E2"/>
<dbReference type="STRING" id="214684.Q5K9E2"/>
<dbReference type="PaxDb" id="214684-Q5K9E2"/>
<dbReference type="EnsemblFungi" id="AAW46182">
    <property type="protein sequence ID" value="AAW46182"/>
    <property type="gene ID" value="CNK02250"/>
</dbReference>
<dbReference type="VEuPathDB" id="FungiDB:CNK02250"/>
<dbReference type="eggNOG" id="KOG1906">
    <property type="taxonomic scope" value="Eukaryota"/>
</dbReference>
<dbReference type="HOGENOM" id="CLU_013572_4_0_1"/>
<dbReference type="InParanoid" id="Q5K9E2"/>
<dbReference type="OrthoDB" id="273917at2759"/>
<dbReference type="Proteomes" id="UP000002149">
    <property type="component" value="Chromosome 11"/>
</dbReference>
<dbReference type="GO" id="GO:0005730">
    <property type="term" value="C:nucleolus"/>
    <property type="evidence" value="ECO:0000318"/>
    <property type="project" value="GO_Central"/>
</dbReference>
<dbReference type="GO" id="GO:0031499">
    <property type="term" value="C:TRAMP complex"/>
    <property type="evidence" value="ECO:0000318"/>
    <property type="project" value="GO_Central"/>
</dbReference>
<dbReference type="GO" id="GO:0005524">
    <property type="term" value="F:ATP binding"/>
    <property type="evidence" value="ECO:0007669"/>
    <property type="project" value="UniProtKB-KW"/>
</dbReference>
<dbReference type="GO" id="GO:0046872">
    <property type="term" value="F:metal ion binding"/>
    <property type="evidence" value="ECO:0007669"/>
    <property type="project" value="UniProtKB-KW"/>
</dbReference>
<dbReference type="GO" id="GO:1990817">
    <property type="term" value="F:poly(A) RNA polymerase activity"/>
    <property type="evidence" value="ECO:0000318"/>
    <property type="project" value="GO_Central"/>
</dbReference>
<dbReference type="GO" id="GO:0043634">
    <property type="term" value="P:polyadenylation-dependent ncRNA catabolic process"/>
    <property type="evidence" value="ECO:0000318"/>
    <property type="project" value="GO_Central"/>
</dbReference>
<dbReference type="GO" id="GO:0031123">
    <property type="term" value="P:RNA 3'-end processing"/>
    <property type="evidence" value="ECO:0000318"/>
    <property type="project" value="GO_Central"/>
</dbReference>
<dbReference type="CDD" id="cd05402">
    <property type="entry name" value="NT_PAP_TUTase"/>
    <property type="match status" value="1"/>
</dbReference>
<dbReference type="FunFam" id="3.30.460.10:FF:000006">
    <property type="entry name" value="non-canonical poly(A) RNA polymerase PAPD5"/>
    <property type="match status" value="1"/>
</dbReference>
<dbReference type="FunFam" id="1.10.1410.10:FF:000003">
    <property type="entry name" value="non-canonical poly(A) RNA polymerase PAPD7"/>
    <property type="match status" value="1"/>
</dbReference>
<dbReference type="Gene3D" id="1.10.1410.10">
    <property type="match status" value="1"/>
</dbReference>
<dbReference type="Gene3D" id="3.30.460.10">
    <property type="entry name" value="Beta Polymerase, domain 2"/>
    <property type="match status" value="1"/>
</dbReference>
<dbReference type="InterPro" id="IPR054708">
    <property type="entry name" value="MTPAP-like_central"/>
</dbReference>
<dbReference type="InterPro" id="IPR043519">
    <property type="entry name" value="NT_sf"/>
</dbReference>
<dbReference type="InterPro" id="IPR002058">
    <property type="entry name" value="PAP_assoc"/>
</dbReference>
<dbReference type="InterPro" id="IPR045862">
    <property type="entry name" value="Trf4-like"/>
</dbReference>
<dbReference type="PANTHER" id="PTHR23092:SF15">
    <property type="entry name" value="INACTIVE NON-CANONICAL POLY(A) RNA POLYMERASE PROTEIN TRF4-2-RELATED"/>
    <property type="match status" value="1"/>
</dbReference>
<dbReference type="PANTHER" id="PTHR23092">
    <property type="entry name" value="POLY(A) RNA POLYMERASE"/>
    <property type="match status" value="1"/>
</dbReference>
<dbReference type="Pfam" id="PF22600">
    <property type="entry name" value="MTPAP-like_central"/>
    <property type="match status" value="1"/>
</dbReference>
<dbReference type="Pfam" id="PF03828">
    <property type="entry name" value="PAP_assoc"/>
    <property type="match status" value="1"/>
</dbReference>
<dbReference type="SUPFAM" id="SSF81301">
    <property type="entry name" value="Nucleotidyltransferase"/>
    <property type="match status" value="1"/>
</dbReference>
<dbReference type="SUPFAM" id="SSF81631">
    <property type="entry name" value="PAP/OAS1 substrate-binding domain"/>
    <property type="match status" value="1"/>
</dbReference>